<comment type="function">
    <text evidence="1 6">Required to coordinate membrane tubulation with reorganization of the actin cytoskeleton during endocytosis. Essential for autophagy of intracellular bacterial pathogens (By similarity). Promotes cdc42-induced actin polymerization by activating the wasl-waspip complex, the predominant form of wasl/n-wasp in cells.</text>
</comment>
<comment type="subunit">
    <text evidence="1 6">Homodimerizes, the dimers can polymerize end-to-end to form filamentous structures (By similarity). Interacts with GTP-bound cdc42 and wasl/n-wasp.</text>
</comment>
<comment type="subcellular location">
    <subcellularLocation>
        <location evidence="1">Cytoplasm</location>
    </subcellularLocation>
    <subcellularLocation>
        <location evidence="1">Cytoplasm</location>
        <location evidence="1">Cytoskeleton</location>
    </subcellularLocation>
    <subcellularLocation>
        <location evidence="1">Cytoplasm</location>
        <location evidence="1">Cell cortex</location>
    </subcellularLocation>
    <subcellularLocation>
        <location evidence="1">Cytoplasmic vesicle</location>
    </subcellularLocation>
    <subcellularLocation>
        <location evidence="1">Cell membrane</location>
        <topology evidence="1">Peripheral membrane protein</topology>
        <orientation evidence="1">Cytoplasmic side</orientation>
    </subcellularLocation>
</comment>
<comment type="domain">
    <text evidence="1">The F-BAR domain binds the phospholipid membrane with its concave surface. The end-to-end polymerization of dimers of these domains provides a curved surface that fits best membranes with around 600 A diameter, and may drive tubulation (By similarity).</text>
</comment>
<comment type="similarity">
    <text evidence="7">Belongs to the FNBP1 family.</text>
</comment>
<feature type="chain" id="PRO_0000261437" description="Formin-binding protein 1-like">
    <location>
        <begin position="1"/>
        <end position="543"/>
    </location>
</feature>
<feature type="domain" description="F-BAR" evidence="3">
    <location>
        <begin position="1"/>
        <end position="263"/>
    </location>
</feature>
<feature type="domain" description="REM-1" evidence="4">
    <location>
        <begin position="339"/>
        <end position="416"/>
    </location>
</feature>
<feature type="domain" description="SH3" evidence="2">
    <location>
        <begin position="479"/>
        <end position="540"/>
    </location>
</feature>
<feature type="region of interest" description="Disordered" evidence="5">
    <location>
        <begin position="424"/>
        <end position="467"/>
    </location>
</feature>
<feature type="coiled-coil region" evidence="1">
    <location>
        <begin position="66"/>
        <end position="258"/>
    </location>
</feature>
<feature type="coiled-coil region" evidence="1">
    <location>
        <begin position="334"/>
        <end position="426"/>
    </location>
</feature>
<feature type="site" description="Mediates end-to-end attachment of dimers" evidence="1">
    <location>
        <position position="165"/>
    </location>
</feature>
<name>FBP1L_XENLA</name>
<protein>
    <recommendedName>
        <fullName>Formin-binding protein 1-like</fullName>
    </recommendedName>
    <alternativeName>
        <fullName>Transducer of Cdc42-dependent actin assembly protein 1</fullName>
        <shortName>Toca-1</shortName>
    </alternativeName>
</protein>
<reference key="1">
    <citation type="submission" date="2004-07" db="EMBL/GenBank/DDBJ databases">
        <authorList>
            <consortium name="NIH - Xenopus Gene Collection (XGC) project"/>
        </authorList>
    </citation>
    <scope>NUCLEOTIDE SEQUENCE [LARGE SCALE MRNA]</scope>
    <source>
        <tissue>Embryo</tissue>
    </source>
</reference>
<reference key="2">
    <citation type="journal article" date="2004" name="Cell">
        <title>Toca-1 mediates Cdc42-dependent actin nucleation by activating the N-WASP-WIP complex.</title>
        <authorList>
            <person name="Ho H.-Y.H."/>
            <person name="Rohatgi R."/>
            <person name="Lebensohn A.M."/>
            <person name="Ma L."/>
            <person name="Li J."/>
            <person name="Gygi S.P."/>
            <person name="Kirschner M.W."/>
        </authorList>
    </citation>
    <scope>FUNCTION</scope>
    <scope>INTERACTION WITH CDC42 AND WASL</scope>
</reference>
<keyword id="KW-0072">Autophagy</keyword>
<keyword id="KW-1003">Cell membrane</keyword>
<keyword id="KW-0175">Coiled coil</keyword>
<keyword id="KW-0963">Cytoplasm</keyword>
<keyword id="KW-0968">Cytoplasmic vesicle</keyword>
<keyword id="KW-0206">Cytoskeleton</keyword>
<keyword id="KW-0254">Endocytosis</keyword>
<keyword id="KW-0446">Lipid-binding</keyword>
<keyword id="KW-0472">Membrane</keyword>
<keyword id="KW-1185">Reference proteome</keyword>
<keyword id="KW-0728">SH3 domain</keyword>
<dbReference type="EMBL" id="BC077835">
    <property type="protein sequence ID" value="AAH77835.1"/>
    <property type="molecule type" value="mRNA"/>
</dbReference>
<dbReference type="RefSeq" id="NP_001086967.1">
    <property type="nucleotide sequence ID" value="NM_001093498.1"/>
</dbReference>
<dbReference type="SMR" id="Q6DCZ7"/>
<dbReference type="GeneID" id="446802"/>
<dbReference type="KEGG" id="xla:446802"/>
<dbReference type="AGR" id="Xenbase:XB-GENE-17338248"/>
<dbReference type="CTD" id="446802"/>
<dbReference type="Xenbase" id="XB-GENE-17338248">
    <property type="gene designation" value="fnbp1l.S"/>
</dbReference>
<dbReference type="OrthoDB" id="8783038at2759"/>
<dbReference type="Proteomes" id="UP000186698">
    <property type="component" value="Chromosome 4S"/>
</dbReference>
<dbReference type="Bgee" id="446802">
    <property type="expression patterns" value="Expressed in egg cell and 19 other cell types or tissues"/>
</dbReference>
<dbReference type="GO" id="GO:0005938">
    <property type="term" value="C:cell cortex"/>
    <property type="evidence" value="ECO:0007669"/>
    <property type="project" value="UniProtKB-SubCell"/>
</dbReference>
<dbReference type="GO" id="GO:0031410">
    <property type="term" value="C:cytoplasmic vesicle"/>
    <property type="evidence" value="ECO:0007669"/>
    <property type="project" value="UniProtKB-KW"/>
</dbReference>
<dbReference type="GO" id="GO:0005856">
    <property type="term" value="C:cytoskeleton"/>
    <property type="evidence" value="ECO:0007669"/>
    <property type="project" value="UniProtKB-SubCell"/>
</dbReference>
<dbReference type="GO" id="GO:0005886">
    <property type="term" value="C:plasma membrane"/>
    <property type="evidence" value="ECO:0007669"/>
    <property type="project" value="UniProtKB-SubCell"/>
</dbReference>
<dbReference type="GO" id="GO:0008289">
    <property type="term" value="F:lipid binding"/>
    <property type="evidence" value="ECO:0007669"/>
    <property type="project" value="UniProtKB-KW"/>
</dbReference>
<dbReference type="GO" id="GO:0006914">
    <property type="term" value="P:autophagy"/>
    <property type="evidence" value="ECO:0007669"/>
    <property type="project" value="UniProtKB-KW"/>
</dbReference>
<dbReference type="GO" id="GO:0006897">
    <property type="term" value="P:endocytosis"/>
    <property type="evidence" value="ECO:0007669"/>
    <property type="project" value="UniProtKB-KW"/>
</dbReference>
<dbReference type="GO" id="GO:0007165">
    <property type="term" value="P:signal transduction"/>
    <property type="evidence" value="ECO:0007669"/>
    <property type="project" value="InterPro"/>
</dbReference>
<dbReference type="CDD" id="cd07675">
    <property type="entry name" value="F-BAR_FNBP1L"/>
    <property type="match status" value="1"/>
</dbReference>
<dbReference type="CDD" id="cd11628">
    <property type="entry name" value="HR1_CIP4_FNBP1L"/>
    <property type="match status" value="1"/>
</dbReference>
<dbReference type="CDD" id="cd12072">
    <property type="entry name" value="SH3_FNBP1L"/>
    <property type="match status" value="1"/>
</dbReference>
<dbReference type="FunFam" id="1.20.1270.60:FF:000002">
    <property type="entry name" value="Formin-binding protein 1-like isoform 1"/>
    <property type="match status" value="1"/>
</dbReference>
<dbReference type="FunFam" id="2.30.30.40:FF:000017">
    <property type="entry name" value="Formin-binding protein 1-like isoform 1"/>
    <property type="match status" value="1"/>
</dbReference>
<dbReference type="Gene3D" id="6.10.140.470">
    <property type="match status" value="1"/>
</dbReference>
<dbReference type="Gene3D" id="1.20.1270.60">
    <property type="entry name" value="Arfaptin homology (AH) domain/BAR domain"/>
    <property type="match status" value="1"/>
</dbReference>
<dbReference type="Gene3D" id="2.30.30.40">
    <property type="entry name" value="SH3 Domains"/>
    <property type="match status" value="1"/>
</dbReference>
<dbReference type="InterPro" id="IPR027267">
    <property type="entry name" value="AH/BAR_dom_sf"/>
</dbReference>
<dbReference type="InterPro" id="IPR031160">
    <property type="entry name" value="F_BAR"/>
</dbReference>
<dbReference type="InterPro" id="IPR001060">
    <property type="entry name" value="FCH_dom"/>
</dbReference>
<dbReference type="InterPro" id="IPR035494">
    <property type="entry name" value="FNBP1L_F-BAR"/>
</dbReference>
<dbReference type="InterPro" id="IPR035493">
    <property type="entry name" value="FNBP1L_SH3"/>
</dbReference>
<dbReference type="InterPro" id="IPR011072">
    <property type="entry name" value="HR1_rho-bd"/>
</dbReference>
<dbReference type="InterPro" id="IPR036028">
    <property type="entry name" value="SH3-like_dom_sf"/>
</dbReference>
<dbReference type="InterPro" id="IPR001452">
    <property type="entry name" value="SH3_domain"/>
</dbReference>
<dbReference type="PANTHER" id="PTHR15735">
    <property type="entry name" value="FCH AND DOUBLE SH3 DOMAINS PROTEIN"/>
    <property type="match status" value="1"/>
</dbReference>
<dbReference type="PANTHER" id="PTHR15735:SF14">
    <property type="entry name" value="FORMIN-BINDING PROTEIN 1-LIKE"/>
    <property type="match status" value="1"/>
</dbReference>
<dbReference type="Pfam" id="PF00611">
    <property type="entry name" value="FCH"/>
    <property type="match status" value="1"/>
</dbReference>
<dbReference type="Pfam" id="PF00018">
    <property type="entry name" value="SH3_1"/>
    <property type="match status" value="1"/>
</dbReference>
<dbReference type="SMART" id="SM00055">
    <property type="entry name" value="FCH"/>
    <property type="match status" value="1"/>
</dbReference>
<dbReference type="SMART" id="SM00326">
    <property type="entry name" value="SH3"/>
    <property type="match status" value="1"/>
</dbReference>
<dbReference type="SUPFAM" id="SSF103657">
    <property type="entry name" value="BAR/IMD domain-like"/>
    <property type="match status" value="1"/>
</dbReference>
<dbReference type="SUPFAM" id="SSF50044">
    <property type="entry name" value="SH3-domain"/>
    <property type="match status" value="1"/>
</dbReference>
<dbReference type="PROSITE" id="PS51741">
    <property type="entry name" value="F_BAR"/>
    <property type="match status" value="1"/>
</dbReference>
<dbReference type="PROSITE" id="PS51860">
    <property type="entry name" value="REM_1"/>
    <property type="match status" value="1"/>
</dbReference>
<dbReference type="PROSITE" id="PS50002">
    <property type="entry name" value="SH3"/>
    <property type="match status" value="1"/>
</dbReference>
<organism>
    <name type="scientific">Xenopus laevis</name>
    <name type="common">African clawed frog</name>
    <dbReference type="NCBI Taxonomy" id="8355"/>
    <lineage>
        <taxon>Eukaryota</taxon>
        <taxon>Metazoa</taxon>
        <taxon>Chordata</taxon>
        <taxon>Craniata</taxon>
        <taxon>Vertebrata</taxon>
        <taxon>Euteleostomi</taxon>
        <taxon>Amphibia</taxon>
        <taxon>Batrachia</taxon>
        <taxon>Anura</taxon>
        <taxon>Pipoidea</taxon>
        <taxon>Pipidae</taxon>
        <taxon>Xenopodinae</taxon>
        <taxon>Xenopus</taxon>
        <taxon>Xenopus</taxon>
    </lineage>
</organism>
<accession>Q6DCZ7</accession>
<gene>
    <name type="primary">fnbp1l</name>
    <name type="synonym">toca1</name>
</gene>
<sequence length="543" mass="63330">MSWGTELWDQFDNLEKHTQWGIDFLDKYAKFVKERLEIEQNYAKQLRNLVKKFCPKRSAKDEEPRFTSCLSFYNILNELNDYAGQREVVAEEIGHRVYAEIMRYSNDIKGERKSHLHEGRKAQQYLDMCLKQMDNSKRKFERECREAEKAQQSYERLDNDTNATKSDVEKAKQQLHLRTHMADESKNEYAAQLQNYNAEQHKHFYIVIPQVYKHLQEMDERRTIKLSECYKGFADAERKVIPIISKCLEGMVQAAKSVDERRDSQIVVDCFKSGFEPPGDFPFEDYSQHIYRTVSDGTISTPKQESLKPDPRMTVGKAKGKLWLFGKKPKGPALEDFSHLPPEQRRKRLQQRIDELSRELQKEMDQKDALNKMKDVYEKNPQMGDPGSLHPKIAETTSNIERLRMEIHKNEGWLSEVEGKVSQRSERRHSAEANHLVAQGRESPEGSYTEDANQEGRVQPQHHAHPEFDDEFDDDEPLPAIGHCKSLYPFDGNNEGTLAMKEGEVLYIIEEDKGDGWTRARKQNGEEGYVPTSYIEITLEKKQ</sequence>
<proteinExistence type="evidence at protein level"/>
<evidence type="ECO:0000250" key="1"/>
<evidence type="ECO:0000255" key="2">
    <source>
        <dbReference type="PROSITE-ProRule" id="PRU00192"/>
    </source>
</evidence>
<evidence type="ECO:0000255" key="3">
    <source>
        <dbReference type="PROSITE-ProRule" id="PRU01077"/>
    </source>
</evidence>
<evidence type="ECO:0000255" key="4">
    <source>
        <dbReference type="PROSITE-ProRule" id="PRU01207"/>
    </source>
</evidence>
<evidence type="ECO:0000256" key="5">
    <source>
        <dbReference type="SAM" id="MobiDB-lite"/>
    </source>
</evidence>
<evidence type="ECO:0000269" key="6">
    <source>
    </source>
</evidence>
<evidence type="ECO:0000305" key="7"/>